<keyword id="KW-1185">Reference proteome</keyword>
<keyword id="KW-0687">Ribonucleoprotein</keyword>
<keyword id="KW-0689">Ribosomal protein</keyword>
<keyword id="KW-0694">RNA-binding</keyword>
<keyword id="KW-0699">rRNA-binding</keyword>
<dbReference type="EMBL" id="CP000509">
    <property type="protein sequence ID" value="ABL83400.1"/>
    <property type="molecule type" value="Genomic_DNA"/>
</dbReference>
<dbReference type="RefSeq" id="WP_011757331.1">
    <property type="nucleotide sequence ID" value="NC_008699.1"/>
</dbReference>
<dbReference type="SMR" id="A1SNL5"/>
<dbReference type="STRING" id="196162.Noca_3902"/>
<dbReference type="KEGG" id="nca:Noca_3902"/>
<dbReference type="eggNOG" id="COG0090">
    <property type="taxonomic scope" value="Bacteria"/>
</dbReference>
<dbReference type="HOGENOM" id="CLU_036235_2_1_11"/>
<dbReference type="OrthoDB" id="9778722at2"/>
<dbReference type="Proteomes" id="UP000000640">
    <property type="component" value="Chromosome"/>
</dbReference>
<dbReference type="GO" id="GO:0015934">
    <property type="term" value="C:large ribosomal subunit"/>
    <property type="evidence" value="ECO:0007669"/>
    <property type="project" value="InterPro"/>
</dbReference>
<dbReference type="GO" id="GO:0019843">
    <property type="term" value="F:rRNA binding"/>
    <property type="evidence" value="ECO:0007669"/>
    <property type="project" value="UniProtKB-UniRule"/>
</dbReference>
<dbReference type="GO" id="GO:0003735">
    <property type="term" value="F:structural constituent of ribosome"/>
    <property type="evidence" value="ECO:0007669"/>
    <property type="project" value="InterPro"/>
</dbReference>
<dbReference type="GO" id="GO:0016740">
    <property type="term" value="F:transferase activity"/>
    <property type="evidence" value="ECO:0007669"/>
    <property type="project" value="InterPro"/>
</dbReference>
<dbReference type="GO" id="GO:0002181">
    <property type="term" value="P:cytoplasmic translation"/>
    <property type="evidence" value="ECO:0007669"/>
    <property type="project" value="TreeGrafter"/>
</dbReference>
<dbReference type="FunFam" id="2.30.30.30:FF:000001">
    <property type="entry name" value="50S ribosomal protein L2"/>
    <property type="match status" value="1"/>
</dbReference>
<dbReference type="FunFam" id="2.40.50.140:FF:000003">
    <property type="entry name" value="50S ribosomal protein L2"/>
    <property type="match status" value="1"/>
</dbReference>
<dbReference type="FunFam" id="4.10.950.10:FF:000001">
    <property type="entry name" value="50S ribosomal protein L2"/>
    <property type="match status" value="1"/>
</dbReference>
<dbReference type="Gene3D" id="2.30.30.30">
    <property type="match status" value="1"/>
</dbReference>
<dbReference type="Gene3D" id="2.40.50.140">
    <property type="entry name" value="Nucleic acid-binding proteins"/>
    <property type="match status" value="1"/>
</dbReference>
<dbReference type="Gene3D" id="4.10.950.10">
    <property type="entry name" value="Ribosomal protein L2, domain 3"/>
    <property type="match status" value="1"/>
</dbReference>
<dbReference type="HAMAP" id="MF_01320_B">
    <property type="entry name" value="Ribosomal_uL2_B"/>
    <property type="match status" value="1"/>
</dbReference>
<dbReference type="InterPro" id="IPR012340">
    <property type="entry name" value="NA-bd_OB-fold"/>
</dbReference>
<dbReference type="InterPro" id="IPR014722">
    <property type="entry name" value="Rib_uL2_dom2"/>
</dbReference>
<dbReference type="InterPro" id="IPR002171">
    <property type="entry name" value="Ribosomal_uL2"/>
</dbReference>
<dbReference type="InterPro" id="IPR005880">
    <property type="entry name" value="Ribosomal_uL2_bac/org-type"/>
</dbReference>
<dbReference type="InterPro" id="IPR022669">
    <property type="entry name" value="Ribosomal_uL2_C"/>
</dbReference>
<dbReference type="InterPro" id="IPR022671">
    <property type="entry name" value="Ribosomal_uL2_CS"/>
</dbReference>
<dbReference type="InterPro" id="IPR014726">
    <property type="entry name" value="Ribosomal_uL2_dom3"/>
</dbReference>
<dbReference type="InterPro" id="IPR022666">
    <property type="entry name" value="Ribosomal_uL2_RNA-bd_dom"/>
</dbReference>
<dbReference type="InterPro" id="IPR008991">
    <property type="entry name" value="Translation_prot_SH3-like_sf"/>
</dbReference>
<dbReference type="NCBIfam" id="TIGR01171">
    <property type="entry name" value="rplB_bact"/>
    <property type="match status" value="1"/>
</dbReference>
<dbReference type="PANTHER" id="PTHR13691:SF5">
    <property type="entry name" value="LARGE RIBOSOMAL SUBUNIT PROTEIN UL2M"/>
    <property type="match status" value="1"/>
</dbReference>
<dbReference type="PANTHER" id="PTHR13691">
    <property type="entry name" value="RIBOSOMAL PROTEIN L2"/>
    <property type="match status" value="1"/>
</dbReference>
<dbReference type="Pfam" id="PF00181">
    <property type="entry name" value="Ribosomal_L2"/>
    <property type="match status" value="1"/>
</dbReference>
<dbReference type="Pfam" id="PF03947">
    <property type="entry name" value="Ribosomal_L2_C"/>
    <property type="match status" value="1"/>
</dbReference>
<dbReference type="PIRSF" id="PIRSF002158">
    <property type="entry name" value="Ribosomal_L2"/>
    <property type="match status" value="1"/>
</dbReference>
<dbReference type="SMART" id="SM01383">
    <property type="entry name" value="Ribosomal_L2"/>
    <property type="match status" value="1"/>
</dbReference>
<dbReference type="SMART" id="SM01382">
    <property type="entry name" value="Ribosomal_L2_C"/>
    <property type="match status" value="1"/>
</dbReference>
<dbReference type="SUPFAM" id="SSF50249">
    <property type="entry name" value="Nucleic acid-binding proteins"/>
    <property type="match status" value="1"/>
</dbReference>
<dbReference type="SUPFAM" id="SSF50104">
    <property type="entry name" value="Translation proteins SH3-like domain"/>
    <property type="match status" value="1"/>
</dbReference>
<dbReference type="PROSITE" id="PS00467">
    <property type="entry name" value="RIBOSOMAL_L2"/>
    <property type="match status" value="1"/>
</dbReference>
<evidence type="ECO:0000255" key="1">
    <source>
        <dbReference type="HAMAP-Rule" id="MF_01320"/>
    </source>
</evidence>
<evidence type="ECO:0000256" key="2">
    <source>
        <dbReference type="SAM" id="MobiDB-lite"/>
    </source>
</evidence>
<evidence type="ECO:0000305" key="3"/>
<organism>
    <name type="scientific">Nocardioides sp. (strain ATCC BAA-499 / JS614)</name>
    <dbReference type="NCBI Taxonomy" id="196162"/>
    <lineage>
        <taxon>Bacteria</taxon>
        <taxon>Bacillati</taxon>
        <taxon>Actinomycetota</taxon>
        <taxon>Actinomycetes</taxon>
        <taxon>Propionibacteriales</taxon>
        <taxon>Nocardioidaceae</taxon>
        <taxon>Nocardioides</taxon>
    </lineage>
</organism>
<reference key="1">
    <citation type="submission" date="2006-12" db="EMBL/GenBank/DDBJ databases">
        <title>Complete sequence of chromosome 1 of Nocardioides sp. JS614.</title>
        <authorList>
            <person name="Copeland A."/>
            <person name="Lucas S."/>
            <person name="Lapidus A."/>
            <person name="Barry K."/>
            <person name="Detter J.C."/>
            <person name="Glavina del Rio T."/>
            <person name="Hammon N."/>
            <person name="Israni S."/>
            <person name="Dalin E."/>
            <person name="Tice H."/>
            <person name="Pitluck S."/>
            <person name="Thompson L.S."/>
            <person name="Brettin T."/>
            <person name="Bruce D."/>
            <person name="Han C."/>
            <person name="Tapia R."/>
            <person name="Schmutz J."/>
            <person name="Larimer F."/>
            <person name="Land M."/>
            <person name="Hauser L."/>
            <person name="Kyrpides N."/>
            <person name="Kim E."/>
            <person name="Mattes T."/>
            <person name="Gossett J."/>
            <person name="Richardson P."/>
        </authorList>
    </citation>
    <scope>NUCLEOTIDE SEQUENCE [LARGE SCALE GENOMIC DNA]</scope>
    <source>
        <strain>ATCC BAA-499 / JS614</strain>
    </source>
</reference>
<protein>
    <recommendedName>
        <fullName evidence="1">Large ribosomal subunit protein uL2</fullName>
    </recommendedName>
    <alternativeName>
        <fullName evidence="3">50S ribosomal protein L2</fullName>
    </alternativeName>
</protein>
<proteinExistence type="inferred from homology"/>
<sequence>MAIRKYKPTTPGRRGSSVADFVEITRTTPEKSLTRPLPKKGGRNNQGRITTRHQGGGHKRAYRLIDFRRYDKDGVPAKVAHIEYDPNRTARIALLHYVDGEKRYIIAPKDLTQGTRVESGPNADIKPGNNLPLRNIPVGTTIHCVELRPGGGAKIARSAGNSAQLVAREGSRATLRMPSGEMRFVDVRCRATVGEVGNAEQSNINWGKAGRMRWKGKRPTVRGVVMNPVDHPHGGGEGKTSGGRHPVSPWGQPEGRTRKRKASDSQIIRRRKTGKNKR</sequence>
<accession>A1SNL5</accession>
<gene>
    <name evidence="1" type="primary">rplB</name>
    <name type="ordered locus">Noca_3902</name>
</gene>
<comment type="function">
    <text evidence="1">One of the primary rRNA binding proteins. Required for association of the 30S and 50S subunits to form the 70S ribosome, for tRNA binding and peptide bond formation. It has been suggested to have peptidyltransferase activity; this is somewhat controversial. Makes several contacts with the 16S rRNA in the 70S ribosome.</text>
</comment>
<comment type="subunit">
    <text evidence="1">Part of the 50S ribosomal subunit. Forms a bridge to the 30S subunit in the 70S ribosome.</text>
</comment>
<comment type="similarity">
    <text evidence="1">Belongs to the universal ribosomal protein uL2 family.</text>
</comment>
<feature type="chain" id="PRO_0000309971" description="Large ribosomal subunit protein uL2">
    <location>
        <begin position="1"/>
        <end position="278"/>
    </location>
</feature>
<feature type="region of interest" description="Disordered" evidence="2">
    <location>
        <begin position="28"/>
        <end position="58"/>
    </location>
</feature>
<feature type="region of interest" description="Disordered" evidence="2">
    <location>
        <begin position="223"/>
        <end position="278"/>
    </location>
</feature>
<feature type="compositionally biased region" description="Polar residues" evidence="2">
    <location>
        <begin position="43"/>
        <end position="53"/>
    </location>
</feature>
<feature type="compositionally biased region" description="Basic residues" evidence="2">
    <location>
        <begin position="268"/>
        <end position="278"/>
    </location>
</feature>
<name>RL2_NOCSJ</name>